<organism>
    <name type="scientific">Saccharomyces cerevisiae (strain ATCC 204508 / S288c)</name>
    <name type="common">Baker's yeast</name>
    <dbReference type="NCBI Taxonomy" id="559292"/>
    <lineage>
        <taxon>Eukaryota</taxon>
        <taxon>Fungi</taxon>
        <taxon>Dikarya</taxon>
        <taxon>Ascomycota</taxon>
        <taxon>Saccharomycotina</taxon>
        <taxon>Saccharomycetes</taxon>
        <taxon>Saccharomycetales</taxon>
        <taxon>Saccharomycetaceae</taxon>
        <taxon>Saccharomyces</taxon>
    </lineage>
</organism>
<dbReference type="EC" id="3.4.11.18" evidence="1"/>
<dbReference type="EMBL" id="M77092">
    <property type="protein sequence ID" value="AAA75193.1"/>
    <property type="molecule type" value="mRNA"/>
</dbReference>
<dbReference type="EMBL" id="U20865">
    <property type="protein sequence ID" value="AAB67398.1"/>
    <property type="molecule type" value="Genomic_DNA"/>
</dbReference>
<dbReference type="EMBL" id="BK006945">
    <property type="protein sequence ID" value="DAA09558.1"/>
    <property type="molecule type" value="Genomic_DNA"/>
</dbReference>
<dbReference type="PIR" id="S59390">
    <property type="entry name" value="S59390"/>
</dbReference>
<dbReference type="RefSeq" id="NP_013345.1">
    <property type="nucleotide sequence ID" value="NM_001182131.1"/>
</dbReference>
<dbReference type="PDB" id="8BQD">
    <property type="method" value="EM"/>
    <property type="resolution" value="3.90 A"/>
    <property type="chains" value="x=1-387"/>
</dbReference>
<dbReference type="PDB" id="8BQX">
    <property type="method" value="EM"/>
    <property type="resolution" value="3.80 A"/>
    <property type="chains" value="x=1-387"/>
</dbReference>
<dbReference type="PDBsum" id="8BQD"/>
<dbReference type="PDBsum" id="8BQX"/>
<dbReference type="EMDB" id="EMD-16182"/>
<dbReference type="EMDB" id="EMD-16191"/>
<dbReference type="SMR" id="Q01662"/>
<dbReference type="BioGRID" id="31511">
    <property type="interactions" value="70"/>
</dbReference>
<dbReference type="DIP" id="DIP-8076N"/>
<dbReference type="FunCoup" id="Q01662">
    <property type="interactions" value="1017"/>
</dbReference>
<dbReference type="IntAct" id="Q01662">
    <property type="interactions" value="17"/>
</dbReference>
<dbReference type="MINT" id="Q01662"/>
<dbReference type="STRING" id="4932.YLR244C"/>
<dbReference type="BindingDB" id="Q01662"/>
<dbReference type="ChEMBL" id="CHEMBL2526"/>
<dbReference type="MEROPS" id="M24.017"/>
<dbReference type="iPTMnet" id="Q01662"/>
<dbReference type="PaxDb" id="4932-YLR244C"/>
<dbReference type="PeptideAtlas" id="Q01662"/>
<dbReference type="EnsemblFungi" id="YLR244C_mRNA">
    <property type="protein sequence ID" value="YLR244C"/>
    <property type="gene ID" value="YLR244C"/>
</dbReference>
<dbReference type="GeneID" id="850945"/>
<dbReference type="KEGG" id="sce:YLR244C"/>
<dbReference type="AGR" id="SGD:S000004234"/>
<dbReference type="SGD" id="S000004234">
    <property type="gene designation" value="MAP1"/>
</dbReference>
<dbReference type="VEuPathDB" id="FungiDB:YLR244C"/>
<dbReference type="eggNOG" id="KOG2738">
    <property type="taxonomic scope" value="Eukaryota"/>
</dbReference>
<dbReference type="GeneTree" id="ENSGT00940000158205"/>
<dbReference type="HOGENOM" id="CLU_015857_2_1_1"/>
<dbReference type="InParanoid" id="Q01662"/>
<dbReference type="OMA" id="FYGDHAY"/>
<dbReference type="OrthoDB" id="3209743at2759"/>
<dbReference type="BioCyc" id="YEAST:YLR244C-MONOMER"/>
<dbReference type="Reactome" id="R-SCE-2514859">
    <property type="pathway name" value="Inactivation, recovery and regulation of the phototransduction cascade"/>
</dbReference>
<dbReference type="BioGRID-ORCS" id="850945">
    <property type="hits" value="4 hits in 10 CRISPR screens"/>
</dbReference>
<dbReference type="CD-CODE" id="E03F929F">
    <property type="entry name" value="Stress granule"/>
</dbReference>
<dbReference type="PRO" id="PR:Q01662"/>
<dbReference type="Proteomes" id="UP000002311">
    <property type="component" value="Chromosome XII"/>
</dbReference>
<dbReference type="RNAct" id="Q01662">
    <property type="molecule type" value="protein"/>
</dbReference>
<dbReference type="GO" id="GO:0010494">
    <property type="term" value="C:cytoplasmic stress granule"/>
    <property type="evidence" value="ECO:0007005"/>
    <property type="project" value="SGD"/>
</dbReference>
<dbReference type="GO" id="GO:0005829">
    <property type="term" value="C:cytosol"/>
    <property type="evidence" value="ECO:0000318"/>
    <property type="project" value="GO_Central"/>
</dbReference>
<dbReference type="GO" id="GO:0022626">
    <property type="term" value="C:cytosolic ribosome"/>
    <property type="evidence" value="ECO:0000314"/>
    <property type="project" value="SGD"/>
</dbReference>
<dbReference type="GO" id="GO:0004239">
    <property type="term" value="F:initiator methionyl aminopeptidase activity"/>
    <property type="evidence" value="ECO:0000315"/>
    <property type="project" value="UniProtKB"/>
</dbReference>
<dbReference type="GO" id="GO:0070006">
    <property type="term" value="F:metalloaminopeptidase activity"/>
    <property type="evidence" value="ECO:0000314"/>
    <property type="project" value="SGD"/>
</dbReference>
<dbReference type="GO" id="GO:0003729">
    <property type="term" value="F:mRNA binding"/>
    <property type="evidence" value="ECO:0000314"/>
    <property type="project" value="SGD"/>
</dbReference>
<dbReference type="GO" id="GO:0008270">
    <property type="term" value="F:zinc ion binding"/>
    <property type="evidence" value="ECO:0000314"/>
    <property type="project" value="UniProtKB"/>
</dbReference>
<dbReference type="GO" id="GO:0010629">
    <property type="term" value="P:negative regulation of gene expression"/>
    <property type="evidence" value="ECO:0000315"/>
    <property type="project" value="SGD"/>
</dbReference>
<dbReference type="GO" id="GO:0016485">
    <property type="term" value="P:protein processing"/>
    <property type="evidence" value="ECO:0000315"/>
    <property type="project" value="UniProtKB"/>
</dbReference>
<dbReference type="CDD" id="cd01086">
    <property type="entry name" value="MetAP1"/>
    <property type="match status" value="1"/>
</dbReference>
<dbReference type="FunFam" id="3.90.230.10:FF:000010">
    <property type="entry name" value="Methionine aminopeptidase"/>
    <property type="match status" value="1"/>
</dbReference>
<dbReference type="Gene3D" id="3.90.230.10">
    <property type="entry name" value="Creatinase/methionine aminopeptidase superfamily"/>
    <property type="match status" value="1"/>
</dbReference>
<dbReference type="HAMAP" id="MF_01974">
    <property type="entry name" value="MetAP_1"/>
    <property type="match status" value="1"/>
</dbReference>
<dbReference type="InterPro" id="IPR036005">
    <property type="entry name" value="Creatinase/aminopeptidase-like"/>
</dbReference>
<dbReference type="InterPro" id="IPR000994">
    <property type="entry name" value="Pept_M24"/>
</dbReference>
<dbReference type="InterPro" id="IPR001714">
    <property type="entry name" value="Pept_M24_MAP"/>
</dbReference>
<dbReference type="InterPro" id="IPR002467">
    <property type="entry name" value="Pept_M24A_MAP1"/>
</dbReference>
<dbReference type="InterPro" id="IPR031615">
    <property type="entry name" value="Zfn-C6H2"/>
</dbReference>
<dbReference type="NCBIfam" id="TIGR00500">
    <property type="entry name" value="met_pdase_I"/>
    <property type="match status" value="1"/>
</dbReference>
<dbReference type="PANTHER" id="PTHR43330">
    <property type="entry name" value="METHIONINE AMINOPEPTIDASE"/>
    <property type="match status" value="1"/>
</dbReference>
<dbReference type="PANTHER" id="PTHR43330:SF7">
    <property type="entry name" value="METHIONINE AMINOPEPTIDASE 1"/>
    <property type="match status" value="1"/>
</dbReference>
<dbReference type="Pfam" id="PF00557">
    <property type="entry name" value="Peptidase_M24"/>
    <property type="match status" value="1"/>
</dbReference>
<dbReference type="Pfam" id="PF15801">
    <property type="entry name" value="zf-C6H2"/>
    <property type="match status" value="1"/>
</dbReference>
<dbReference type="PRINTS" id="PR00599">
    <property type="entry name" value="MAPEPTIDASE"/>
</dbReference>
<dbReference type="SUPFAM" id="SSF55920">
    <property type="entry name" value="Creatinase/aminopeptidase"/>
    <property type="match status" value="1"/>
</dbReference>
<dbReference type="PROSITE" id="PS00680">
    <property type="entry name" value="MAP_1"/>
    <property type="match status" value="1"/>
</dbReference>
<dbReference type="PROSITE" id="PS52013">
    <property type="entry name" value="ZF_C6H2"/>
    <property type="match status" value="1"/>
</dbReference>
<evidence type="ECO:0000255" key="1">
    <source>
        <dbReference type="HAMAP-Rule" id="MF_03174"/>
    </source>
</evidence>
<evidence type="ECO:0000255" key="2">
    <source>
        <dbReference type="PROSITE-ProRule" id="PRU01357"/>
    </source>
</evidence>
<evidence type="ECO:0000269" key="3">
    <source>
    </source>
</evidence>
<evidence type="ECO:0000269" key="4">
    <source>
    </source>
</evidence>
<evidence type="ECO:0000269" key="5">
    <source>
    </source>
</evidence>
<evidence type="ECO:0000269" key="6">
    <source>
    </source>
</evidence>
<evidence type="ECO:0000269" key="7">
    <source>
    </source>
</evidence>
<evidence type="ECO:0000269" key="8">
    <source>
    </source>
</evidence>
<evidence type="ECO:0000269" key="9">
    <source>
    </source>
</evidence>
<evidence type="ECO:0000269" key="10">
    <source>
    </source>
</evidence>
<evidence type="ECO:0000269" key="11">
    <source>
    </source>
</evidence>
<evidence type="ECO:0000269" key="12">
    <source>
    </source>
</evidence>
<evidence type="ECO:0007744" key="13">
    <source>
    </source>
</evidence>
<accession>Q01662</accession>
<accession>D6VYP2</accession>
<name>MAP1_YEAST</name>
<protein>
    <recommendedName>
        <fullName evidence="1">Methionine aminopeptidase 1</fullName>
        <shortName evidence="1">MAP 1</shortName>
        <shortName evidence="1">MetAP 1</shortName>
        <ecNumber evidence="1">3.4.11.18</ecNumber>
    </recommendedName>
    <alternativeName>
        <fullName evidence="1">Peptidase M 1</fullName>
    </alternativeName>
</protein>
<reference key="1">
    <citation type="journal article" date="1992" name="J. Biol. Chem.">
        <title>Molecular cloning, sequencing, deletion, and overexpression of a methionine aminopeptidase gene from Saccharomyces cerevisiae.</title>
        <authorList>
            <person name="Chang Y.-H."/>
            <person name="Teichert U."/>
            <person name="Smith J.A."/>
        </authorList>
    </citation>
    <scope>NUCLEOTIDE SEQUENCE [MRNA]</scope>
    <scope>PROTEIN SEQUENCE OF 11-24</scope>
</reference>
<reference key="2">
    <citation type="journal article" date="1997" name="Nature">
        <title>The nucleotide sequence of Saccharomyces cerevisiae chromosome XII.</title>
        <authorList>
            <person name="Johnston M."/>
            <person name="Hillier L.W."/>
            <person name="Riles L."/>
            <person name="Albermann K."/>
            <person name="Andre B."/>
            <person name="Ansorge W."/>
            <person name="Benes V."/>
            <person name="Brueckner M."/>
            <person name="Delius H."/>
            <person name="Dubois E."/>
            <person name="Duesterhoeft A."/>
            <person name="Entian K.-D."/>
            <person name="Floeth M."/>
            <person name="Goffeau A."/>
            <person name="Hebling U."/>
            <person name="Heumann K."/>
            <person name="Heuss-Neitzel D."/>
            <person name="Hilbert H."/>
            <person name="Hilger F."/>
            <person name="Kleine K."/>
            <person name="Koetter P."/>
            <person name="Louis E.J."/>
            <person name="Messenguy F."/>
            <person name="Mewes H.-W."/>
            <person name="Miosga T."/>
            <person name="Moestl D."/>
            <person name="Mueller-Auer S."/>
            <person name="Nentwich U."/>
            <person name="Obermaier B."/>
            <person name="Piravandi E."/>
            <person name="Pohl T.M."/>
            <person name="Portetelle D."/>
            <person name="Purnelle B."/>
            <person name="Rechmann S."/>
            <person name="Rieger M."/>
            <person name="Rinke M."/>
            <person name="Rose M."/>
            <person name="Scharfe M."/>
            <person name="Scherens B."/>
            <person name="Scholler P."/>
            <person name="Schwager C."/>
            <person name="Schwarz S."/>
            <person name="Underwood A.P."/>
            <person name="Urrestarazu L.A."/>
            <person name="Vandenbol M."/>
            <person name="Verhasselt P."/>
            <person name="Vierendeels F."/>
            <person name="Voet M."/>
            <person name="Volckaert G."/>
            <person name="Voss H."/>
            <person name="Wambutt R."/>
            <person name="Wedler E."/>
            <person name="Wedler H."/>
            <person name="Zimmermann F.K."/>
            <person name="Zollner A."/>
            <person name="Hani J."/>
            <person name="Hoheisel J.D."/>
        </authorList>
    </citation>
    <scope>NUCLEOTIDE SEQUENCE [LARGE SCALE GENOMIC DNA]</scope>
    <source>
        <strain>ATCC 204508 / S288c</strain>
    </source>
</reference>
<reference key="3">
    <citation type="journal article" date="2014" name="G3 (Bethesda)">
        <title>The reference genome sequence of Saccharomyces cerevisiae: Then and now.</title>
        <authorList>
            <person name="Engel S.R."/>
            <person name="Dietrich F.S."/>
            <person name="Fisk D.G."/>
            <person name="Binkley G."/>
            <person name="Balakrishnan R."/>
            <person name="Costanzo M.C."/>
            <person name="Dwight S.S."/>
            <person name="Hitz B.C."/>
            <person name="Karra K."/>
            <person name="Nash R.S."/>
            <person name="Weng S."/>
            <person name="Wong E.D."/>
            <person name="Lloyd P."/>
            <person name="Skrzypek M.S."/>
            <person name="Miyasato S.R."/>
            <person name="Simison M."/>
            <person name="Cherry J.M."/>
        </authorList>
    </citation>
    <scope>GENOME REANNOTATION</scope>
    <source>
        <strain>ATCC 204508 / S288c</strain>
    </source>
</reference>
<reference key="4">
    <citation type="journal article" date="1995" name="Mol. Gen. Genet.">
        <title>Evidence that two zinc fingers in the methionine aminopeptidase from Saccharomyces cerevisiae are important for normal growth.</title>
        <authorList>
            <person name="Zuo S."/>
            <person name="Guo Q."/>
            <person name="Ling C."/>
            <person name="Chang Y.H."/>
        </authorList>
    </citation>
    <scope>FUNCTION</scope>
    <scope>ZINC-BINDING</scope>
    <scope>BIOPHYSICOCHEMICAL PROPERTIES</scope>
</reference>
<reference key="5">
    <citation type="journal article" date="1997" name="Arch. Biochem. Biophys.">
        <title>A dominant negative mutation in Saccharomyces cerevisiae methionine aminopeptidase-1 affects catalysis and interferes with the function of methionine aminopeptidase-2.</title>
        <authorList>
            <person name="Klinkenberg M."/>
            <person name="Ling C."/>
            <person name="Chang Y.H."/>
        </authorList>
    </citation>
    <scope>MUTAGENESIS OF ASP-219</scope>
</reference>
<reference key="6">
    <citation type="journal article" date="1997" name="Proc. Natl. Acad. Sci. U.S.A.">
        <title>The anti-angiogenic agent fumagillin covalently binds and inhibits the methionine aminopeptidase, MetAP-2.</title>
        <authorList>
            <person name="Sin N."/>
            <person name="Meng L."/>
            <person name="Wang M.Q."/>
            <person name="Wen J.J."/>
            <person name="Bornmann W.G."/>
            <person name="Crews C.M."/>
        </authorList>
    </citation>
    <scope>ACTIVITY REGULATION</scope>
</reference>
<reference key="7">
    <citation type="journal article" date="1998" name="Protein Sci.">
        <title>Yeast methionine aminopeptidase I can utilize either Zn2+ or Co2+ as a cofactor: a case of mistaken identity?</title>
        <authorList>
            <person name="Walker K.W."/>
            <person name="Bradshaw R.A."/>
        </authorList>
    </citation>
    <scope>COFACTOR</scope>
</reference>
<reference key="8">
    <citation type="journal article" date="1999" name="Biotechnol. Appl. Biochem.">
        <title>Yeast (Saccharomyces cerevisiae) methionine aminopeptidase I: rapid purification and improved activity assay.</title>
        <authorList>
            <person name="Walker K.W."/>
            <person name="Yi E."/>
            <person name="Bradshaw R.A."/>
        </authorList>
    </citation>
    <scope>BIOPHYSICOCHEMICAL PROPERTIES</scope>
</reference>
<reference key="9">
    <citation type="journal article" date="2002" name="Arch. Biochem. Biophys.">
        <title>The specificity in vivo of two distinct methionine aminopeptidases in Saccharomyces cerevisiae.</title>
        <authorList>
            <person name="Chen S."/>
            <person name="Vetro J.A."/>
            <person name="Chang Y.H."/>
        </authorList>
    </citation>
    <scope>FUNCTION</scope>
    <scope>SUBSTRATE SPECIFICITY</scope>
</reference>
<reference key="10">
    <citation type="journal article" date="2002" name="J. Cell. Biochem.">
        <title>Yeast methionine aminopeptidase type 1 is ribosome-associated and requires its N-terminal zinc finger domain for normal function in vivo.</title>
        <authorList>
            <person name="Vetro J.A."/>
            <person name="Chang Y.H."/>
        </authorList>
    </citation>
    <scope>FUNCTION</scope>
    <scope>SUBUNIT</scope>
    <scope>MUTAGENESIS OF CYS-22 AND HIS-62</scope>
</reference>
<reference key="11">
    <citation type="journal article" date="2003" name="J. Cell. Biochem.">
        <title>N-terminal methionine removal and methionine metabolism in Saccharomyces cerevisiae.</title>
        <authorList>
            <person name="Dummitt B."/>
            <person name="Micka W.S."/>
            <person name="Chang Y.H."/>
        </authorList>
    </citation>
    <scope>FUNCTION</scope>
</reference>
<reference key="12">
    <citation type="journal article" date="2003" name="Nature">
        <title>Global analysis of protein expression in yeast.</title>
        <authorList>
            <person name="Ghaemmaghami S."/>
            <person name="Huh W.-K."/>
            <person name="Bower K."/>
            <person name="Howson R.W."/>
            <person name="Belle A."/>
            <person name="Dephoure N."/>
            <person name="O'Shea E.K."/>
            <person name="Weissman J.S."/>
        </authorList>
    </citation>
    <scope>LEVEL OF PROTEIN EXPRESSION [LARGE SCALE ANALYSIS]</scope>
</reference>
<reference key="13">
    <citation type="journal article" date="2012" name="Proc. Natl. Acad. Sci. U.S.A.">
        <title>N-terminal acetylome analyses and functional insights of the N-terminal acetyltransferase NatB.</title>
        <authorList>
            <person name="Van Damme P."/>
            <person name="Lasa M."/>
            <person name="Polevoda B."/>
            <person name="Gazquez C."/>
            <person name="Elosegui-Artola A."/>
            <person name="Kim D.S."/>
            <person name="De Juan-Pardo E."/>
            <person name="Demeyer K."/>
            <person name="Hole K."/>
            <person name="Larrea E."/>
            <person name="Timmerman E."/>
            <person name="Prieto J."/>
            <person name="Arnesen T."/>
            <person name="Sherman F."/>
            <person name="Gevaert K."/>
            <person name="Aldabe R."/>
        </authorList>
    </citation>
    <scope>ACETYLATION [LARGE SCALE ANALYSIS] AT SER-2</scope>
    <scope>CLEAVAGE OF INITIATOR METHIONINE [LARGE SCALE ANALYSIS]</scope>
    <scope>IDENTIFICATION BY MASS SPECTROMETRY [LARGE SCALE ANALYSIS]</scope>
</reference>
<reference key="14">
    <citation type="journal article" date="2022" name="Cell Rep.">
        <title>Zng1 is a GTP-dependent zinc transferase needed for activation of methionine aminopeptidase.</title>
        <authorList>
            <person name="Pasquini M."/>
            <person name="Grosjean N."/>
            <person name="Hixson K.K."/>
            <person name="Nicora C.D."/>
            <person name="Yee E.F."/>
            <person name="Lipton M."/>
            <person name="Blaby I.K."/>
            <person name="Haley J.D."/>
            <person name="Blaby-Haas C.E."/>
        </authorList>
    </citation>
    <scope>FUNCTION</scope>
    <scope>COFACTOR</scope>
</reference>
<proteinExistence type="evidence at protein level"/>
<gene>
    <name type="primary">MAP1</name>
    <name type="ordered locus">YLR244C</name>
    <name type="ORF">L9672.12</name>
</gene>
<keyword id="KW-0002">3D-structure</keyword>
<keyword id="KW-0007">Acetylation</keyword>
<keyword id="KW-0031">Aminopeptidase</keyword>
<keyword id="KW-0963">Cytoplasm</keyword>
<keyword id="KW-0903">Direct protein sequencing</keyword>
<keyword id="KW-0378">Hydrolase</keyword>
<keyword id="KW-0479">Metal-binding</keyword>
<keyword id="KW-0645">Protease</keyword>
<keyword id="KW-1185">Reference proteome</keyword>
<keyword id="KW-0862">Zinc</keyword>
<keyword id="KW-0863">Zinc-finger</keyword>
<feature type="initiator methionine" description="Removed" evidence="13">
    <location>
        <position position="1"/>
    </location>
</feature>
<feature type="propeptide" id="PRO_0000018596" evidence="8">
    <location>
        <begin position="2"/>
        <end position="10"/>
    </location>
</feature>
<feature type="chain" id="PRO_0000018597" description="Methionine aminopeptidase 1">
    <location>
        <begin position="11"/>
        <end position="387"/>
    </location>
</feature>
<feature type="zinc finger region" description="C6H2-type" evidence="2">
    <location>
        <begin position="19"/>
        <end position="73"/>
    </location>
</feature>
<feature type="binding site" evidence="1">
    <location>
        <position position="22"/>
    </location>
    <ligand>
        <name>Zn(2+)</name>
        <dbReference type="ChEBI" id="CHEBI:29105"/>
        <label>1</label>
    </ligand>
</feature>
<feature type="binding site" evidence="1">
    <location>
        <position position="27"/>
    </location>
    <ligand>
        <name>Zn(2+)</name>
        <dbReference type="ChEBI" id="CHEBI:29105"/>
        <label>1</label>
    </ligand>
</feature>
<feature type="binding site" evidence="1">
    <location>
        <position position="37"/>
    </location>
    <ligand>
        <name>Zn(2+)</name>
        <dbReference type="ChEBI" id="CHEBI:29105"/>
        <label>2</label>
    </ligand>
</feature>
<feature type="binding site" evidence="1">
    <location>
        <position position="40"/>
    </location>
    <ligand>
        <name>Zn(2+)</name>
        <dbReference type="ChEBI" id="CHEBI:29105"/>
        <label>2</label>
    </ligand>
</feature>
<feature type="binding site" evidence="1">
    <location>
        <position position="50"/>
    </location>
    <ligand>
        <name>Zn(2+)</name>
        <dbReference type="ChEBI" id="CHEBI:29105"/>
        <label>1</label>
    </ligand>
</feature>
<feature type="binding site" evidence="1">
    <location>
        <position position="54"/>
    </location>
    <ligand>
        <name>Zn(2+)</name>
        <dbReference type="ChEBI" id="CHEBI:29105"/>
        <label>1</label>
    </ligand>
</feature>
<feature type="binding site" evidence="1">
    <location>
        <position position="62"/>
    </location>
    <ligand>
        <name>Zn(2+)</name>
        <dbReference type="ChEBI" id="CHEBI:29105"/>
        <label>2</label>
    </ligand>
</feature>
<feature type="binding site" evidence="1">
    <location>
        <position position="66"/>
    </location>
    <ligand>
        <name>Zn(2+)</name>
        <dbReference type="ChEBI" id="CHEBI:29105"/>
        <label>2</label>
    </ligand>
</feature>
<feature type="binding site" evidence="1">
    <location>
        <position position="202"/>
    </location>
    <ligand>
        <name>a protein</name>
        <dbReference type="ChEBI" id="CHEBI:16541"/>
    </ligand>
    <ligandPart>
        <name>N-terminal L-methionine residue</name>
        <dbReference type="ChEBI" id="CHEBI:64731"/>
    </ligandPart>
</feature>
<feature type="binding site" evidence="1">
    <location>
        <position position="219"/>
    </location>
    <ligand>
        <name>Zn(2+)</name>
        <dbReference type="ChEBI" id="CHEBI:29105"/>
        <label>3</label>
    </ligand>
</feature>
<feature type="binding site" evidence="1">
    <location>
        <position position="230"/>
    </location>
    <ligand>
        <name>Zn(2+)</name>
        <dbReference type="ChEBI" id="CHEBI:29105"/>
        <label>3</label>
    </ligand>
</feature>
<feature type="binding site" evidence="1">
    <location>
        <position position="230"/>
    </location>
    <ligand>
        <name>Zn(2+)</name>
        <dbReference type="ChEBI" id="CHEBI:29105"/>
        <label>4</label>
        <note>catalytic</note>
    </ligand>
</feature>
<feature type="binding site" evidence="1">
    <location>
        <position position="294"/>
    </location>
    <ligand>
        <name>Zn(2+)</name>
        <dbReference type="ChEBI" id="CHEBI:29105"/>
        <label>4</label>
        <note>catalytic</note>
    </ligand>
</feature>
<feature type="binding site" evidence="1">
    <location>
        <position position="301"/>
    </location>
    <ligand>
        <name>a protein</name>
        <dbReference type="ChEBI" id="CHEBI:16541"/>
    </ligand>
    <ligandPart>
        <name>N-terminal L-methionine residue</name>
        <dbReference type="ChEBI" id="CHEBI:64731"/>
    </ligandPart>
</feature>
<feature type="binding site" evidence="1">
    <location>
        <position position="327"/>
    </location>
    <ligand>
        <name>Zn(2+)</name>
        <dbReference type="ChEBI" id="CHEBI:29105"/>
        <label>4</label>
        <note>catalytic</note>
    </ligand>
</feature>
<feature type="binding site" evidence="1">
    <location>
        <position position="358"/>
    </location>
    <ligand>
        <name>Zn(2+)</name>
        <dbReference type="ChEBI" id="CHEBI:29105"/>
        <label>3</label>
    </ligand>
</feature>
<feature type="binding site" evidence="1">
    <location>
        <position position="358"/>
    </location>
    <ligand>
        <name>Zn(2+)</name>
        <dbReference type="ChEBI" id="CHEBI:29105"/>
        <label>4</label>
        <note>catalytic</note>
    </ligand>
</feature>
<feature type="modified residue" description="N-acetylserine" evidence="13">
    <location>
        <position position="2"/>
    </location>
</feature>
<feature type="mutagenesis site" description="Changes the ribosome profile distribution of the protein and also increases its occurrence in the cytosolic fraction." evidence="5">
    <original>C</original>
    <variation>S</variation>
    <location>
        <position position="22"/>
    </location>
</feature>
<feature type="mutagenesis site" description="Changes the ribosome profile distribution of the protein." evidence="5">
    <original>H</original>
    <variation>R</variation>
    <location>
        <position position="62"/>
    </location>
</feature>
<feature type="mutagenesis site" description="Reduces activity 1000-fold." evidence="12">
    <original>D</original>
    <variation>N</variation>
    <location>
        <position position="219"/>
    </location>
</feature>
<comment type="function">
    <text evidence="4 5 6 9 10">Cotranslationally removes the N-terminal methionine from nascent proteins. The N-terminal methionine is often cleaved when the second residue in the primary sequence is small and uncharged (Met-Ala-, Cys, Gly, Pro, Ser, Thr, or Val). Plays the major role in N-terminal methionine removal. Less efficient when the second residue is Val.</text>
</comment>
<comment type="catalytic activity">
    <reaction evidence="1">
        <text>Release of N-terminal amino acids, preferentially methionine, from peptides and arylamides.</text>
        <dbReference type="EC" id="3.4.11.18"/>
    </reaction>
</comment>
<comment type="cofactor">
    <cofactor evidence="1 9">
        <name>Zn(2+)</name>
        <dbReference type="ChEBI" id="CHEBI:29105"/>
    </cofactor>
    <cofactor evidence="1">
        <name>Co(2+)</name>
        <dbReference type="ChEBI" id="CHEBI:48828"/>
    </cofactor>
    <cofactor evidence="1">
        <name>Mn(2+)</name>
        <dbReference type="ChEBI" id="CHEBI:29035"/>
    </cofactor>
    <cofactor evidence="1">
        <name>Fe(2+)</name>
        <dbReference type="ChEBI" id="CHEBI:29033"/>
    </cofactor>
    <text evidence="1 9">Binds 2 divalent metal cations per subunit. Has a high-affinity and a low affinity metal-binding site. The true nature of the physiological cofactor is under debate. The enzyme is active with zinc, cobalt, manganese or divalent iron ions. Has high activity with zinc; zinc cofactor is transferred into the active site region by the ZNG1 zinc chaperone.</text>
</comment>
<comment type="activity regulation">
    <text evidence="11">In contract to the MetAP 2 isoform, is not inhibited by the fungal metabolite fumagillin, an antiangiogenic drug.</text>
</comment>
<comment type="biophysicochemical properties">
    <kinetics>
        <KM evidence="3 10">2.68 mM for a Met-Ala-Ser peptide</KM>
        <KM evidence="3 10">6.56 mM for a Met-Gly-Met-Met peptide</KM>
        <KM evidence="3 10">139 uM for a Met-Ala-Ser-Trp peptide</KM>
        <text>kcat is 1173, 1416 and 507 min(-1) with a Met-Ala-Ser, a Met-Gly-Met-Met and a Met-Ala-Ser-Trp peptide substrate, respectively.</text>
    </kinetics>
</comment>
<comment type="subunit">
    <text evidence="1 5">Associates with the 60S ribosomal subunit of the 80S translational complex.</text>
</comment>
<comment type="subcellular location">
    <subcellularLocation>
        <location evidence="1">Cytoplasm</location>
    </subcellularLocation>
</comment>
<comment type="miscellaneous">
    <text evidence="7">Present with 19600 molecules/cell in log phase SD medium.</text>
</comment>
<comment type="similarity">
    <text evidence="1">Belongs to the peptidase M24A family. Methionine aminopeptidase type 1 subfamily.</text>
</comment>
<sequence length="387" mass="43373">MSTATTTVTTSDQASHPTKIYCSGLQCGRETSSQMKCPVCLKQGIVSIFCDTSCYENNYKAHKALHNAKDGLEGAYDPFPKFKYSGKVKASYPLTPRRYVPEDIPKPDWAANGLPVSEQRNDRLNNIPIYKKDQIKKIRKACMLGREVLDIAAAHVRPGITTDELDEIVHNETIKRGAYPSPLNYYNFPKSLCTSVNEVICHGVPDKTVLKEGDIVNLDVSLYYQGYHADLNETYYVGENISKEALNTTETSRECLKLAIKMCKPGTTFQELGDHIEKHATENKCSVVRTYCGHGVGEFFHCSPNIPHYAKNRTPGVMKPGMVFTIEPMINEGTWKDMTWPDDWTSTTQDGKLSAQFEHTLLVTEHGVEILTARNKKSPGGPRQRIK</sequence>